<proteinExistence type="inferred from homology"/>
<accession>B0JI44</accession>
<feature type="chain" id="PRO_1000086079" description="Proton extrusion protein PxcA">
    <location>
        <begin position="1"/>
        <end position="445"/>
    </location>
</feature>
<feature type="transmembrane region" description="Helical" evidence="1">
    <location>
        <begin position="227"/>
        <end position="247"/>
    </location>
</feature>
<feature type="transmembrane region" description="Helical" evidence="1">
    <location>
        <begin position="322"/>
        <end position="342"/>
    </location>
</feature>
<feature type="transmembrane region" description="Helical" evidence="1">
    <location>
        <begin position="369"/>
        <end position="389"/>
    </location>
</feature>
<feature type="transmembrane region" description="Helical" evidence="1">
    <location>
        <begin position="405"/>
        <end position="425"/>
    </location>
</feature>
<organism>
    <name type="scientific">Microcystis aeruginosa (strain NIES-843 / IAM M-2473)</name>
    <dbReference type="NCBI Taxonomy" id="449447"/>
    <lineage>
        <taxon>Bacteria</taxon>
        <taxon>Bacillati</taxon>
        <taxon>Cyanobacteriota</taxon>
        <taxon>Cyanophyceae</taxon>
        <taxon>Oscillatoriophycideae</taxon>
        <taxon>Chroococcales</taxon>
        <taxon>Microcystaceae</taxon>
        <taxon>Microcystis</taxon>
    </lineage>
</organism>
<reference key="1">
    <citation type="journal article" date="2007" name="DNA Res.">
        <title>Complete genomic structure of the bloom-forming toxic cyanobacterium Microcystis aeruginosa NIES-843.</title>
        <authorList>
            <person name="Kaneko T."/>
            <person name="Nakajima N."/>
            <person name="Okamoto S."/>
            <person name="Suzuki I."/>
            <person name="Tanabe Y."/>
            <person name="Tamaoki M."/>
            <person name="Nakamura Y."/>
            <person name="Kasai F."/>
            <person name="Watanabe A."/>
            <person name="Kawashima K."/>
            <person name="Kishida Y."/>
            <person name="Ono A."/>
            <person name="Shimizu Y."/>
            <person name="Takahashi C."/>
            <person name="Minami C."/>
            <person name="Fujishiro T."/>
            <person name="Kohara M."/>
            <person name="Katoh M."/>
            <person name="Nakazaki N."/>
            <person name="Nakayama S."/>
            <person name="Yamada M."/>
            <person name="Tabata S."/>
            <person name="Watanabe M.M."/>
        </authorList>
    </citation>
    <scope>NUCLEOTIDE SEQUENCE [LARGE SCALE GENOMIC DNA]</scope>
    <source>
        <strain>NIES-843 / IAM M-247</strain>
    </source>
</reference>
<dbReference type="EMBL" id="AP009552">
    <property type="protein sequence ID" value="BAG05606.1"/>
    <property type="molecule type" value="Genomic_DNA"/>
</dbReference>
<dbReference type="RefSeq" id="WP_002787816.1">
    <property type="nucleotide sequence ID" value="NC_010296.1"/>
</dbReference>
<dbReference type="SMR" id="B0JI44"/>
<dbReference type="STRING" id="449447.MAE_57840"/>
<dbReference type="PaxDb" id="449447-MAE_57840"/>
<dbReference type="EnsemblBacteria" id="BAG05606">
    <property type="protein sequence ID" value="BAG05606"/>
    <property type="gene ID" value="MAE_57840"/>
</dbReference>
<dbReference type="KEGG" id="mar:MAE_57840"/>
<dbReference type="eggNOG" id="ENOG502Z8DN">
    <property type="taxonomic scope" value="Bacteria"/>
</dbReference>
<dbReference type="HOGENOM" id="CLU_690401_0_0_3"/>
<dbReference type="BioCyc" id="MAER449447:MAE_RS25230-MONOMER"/>
<dbReference type="Proteomes" id="UP000001510">
    <property type="component" value="Chromosome"/>
</dbReference>
<dbReference type="GO" id="GO:0005886">
    <property type="term" value="C:plasma membrane"/>
    <property type="evidence" value="ECO:0007669"/>
    <property type="project" value="UniProtKB-SubCell"/>
</dbReference>
<dbReference type="GO" id="GO:0015078">
    <property type="term" value="F:proton transmembrane transporter activity"/>
    <property type="evidence" value="ECO:0007669"/>
    <property type="project" value="UniProtKB-UniRule"/>
</dbReference>
<dbReference type="HAMAP" id="MF_01308">
    <property type="entry name" value="CemA_PxcA"/>
    <property type="match status" value="1"/>
</dbReference>
<dbReference type="InterPro" id="IPR004282">
    <property type="entry name" value="CemA"/>
</dbReference>
<dbReference type="NCBIfam" id="NF002703">
    <property type="entry name" value="PRK02507.1-1"/>
    <property type="match status" value="1"/>
</dbReference>
<dbReference type="PANTHER" id="PTHR33650:SF2">
    <property type="entry name" value="CHLOROPLAST ENVELOPE MEMBRANE PROTEIN"/>
    <property type="match status" value="1"/>
</dbReference>
<dbReference type="PANTHER" id="PTHR33650">
    <property type="entry name" value="CHLOROPLAST ENVELOPE MEMBRANE PROTEIN-RELATED"/>
    <property type="match status" value="1"/>
</dbReference>
<dbReference type="Pfam" id="PF03040">
    <property type="entry name" value="CemA"/>
    <property type="match status" value="1"/>
</dbReference>
<name>PXCA_MICAN</name>
<keyword id="KW-0997">Cell inner membrane</keyword>
<keyword id="KW-1003">Cell membrane</keyword>
<keyword id="KW-0375">Hydrogen ion transport</keyword>
<keyword id="KW-0406">Ion transport</keyword>
<keyword id="KW-0472">Membrane</keyword>
<keyword id="KW-0812">Transmembrane</keyword>
<keyword id="KW-1133">Transmembrane helix</keyword>
<keyword id="KW-0813">Transport</keyword>
<protein>
    <recommendedName>
        <fullName evidence="1">Proton extrusion protein PxcA</fullName>
    </recommendedName>
</protein>
<comment type="function">
    <text evidence="1">Required for H(+) efflux immediately after light irradiation to form a rapid H(+) concentration gradient across the thylakoid membranes. Together with PxcL, contributes to transient H(+) uptake following dark to light transition.</text>
</comment>
<comment type="subcellular location">
    <subcellularLocation>
        <location evidence="1">Cell inner membrane</location>
        <topology evidence="1">Multi-pass membrane protein</topology>
    </subcellularLocation>
</comment>
<comment type="similarity">
    <text evidence="1">Belongs to the CemA family.</text>
</comment>
<sequence length="445" mass="51317">MNLNRILQGVNQWLLQTPERSLDEAYHAALKIKEIEDKHFQGRKVANEFSNYGSSTNSYFIAEVKGYLQKIKVRLTEFKASRSIVNTFGPNQPTINNGVITVTTDVCLKKLQFIDSIIGKYQDNYWQEDIQDVPKSIQNRNFEQETAKNKTSRNRSFLAAGSIEDEEIIKSNKSQKATEKPGVLPRSFVNTFNRIKQEIDPQAEESEEAVLKKFRNSRYKTAISLKFILLLIIVPLLTQQLTKTFLITPLVNKYFQQQEQFIFINQDLEEEAFSELRRFEEALHFRGMIGLAPKLSNEEIEGEITKKAAVLSEEFRQRGLNAIANIFADICSLIAFGFVVAFSRREIEIVKSFLDGILYNLSDSAKAFLIILFTDIFVGFHSPHGWEVILEGLSRHFGLPENRQFNFLFIATFPVILDTVLKYWIFRYLNRISPSAVATYRNMNE</sequence>
<evidence type="ECO:0000255" key="1">
    <source>
        <dbReference type="HAMAP-Rule" id="MF_01308"/>
    </source>
</evidence>
<gene>
    <name evidence="1" type="primary">pxcA</name>
    <name type="ordered locus">MAE_57840</name>
</gene>